<evidence type="ECO:0000250" key="1"/>
<evidence type="ECO:0000269" key="2">
    <source>
    </source>
</evidence>
<evidence type="ECO:0000305" key="3"/>
<evidence type="ECO:0000305" key="4">
    <source>
    </source>
</evidence>
<evidence type="ECO:0007744" key="5">
    <source>
    </source>
</evidence>
<proteinExistence type="evidence at protein level"/>
<accession>Q6PTT0</accession>
<comment type="function">
    <text evidence="2">Involved in the hydrolysis of N-acylated or N-acetylated amino acids (except L-aspartate).</text>
</comment>
<comment type="catalytic activity">
    <reaction evidence="4">
        <text>an N-acyl-L-amino acid + H2O = an L-alpha-amino acid + a carboxylate</text>
        <dbReference type="Rhea" id="RHEA:15565"/>
        <dbReference type="ChEBI" id="CHEBI:15377"/>
        <dbReference type="ChEBI" id="CHEBI:29067"/>
        <dbReference type="ChEBI" id="CHEBI:59869"/>
        <dbReference type="ChEBI" id="CHEBI:59874"/>
        <dbReference type="EC" id="3.5.1.14"/>
    </reaction>
    <physiologicalReaction direction="left-to-right" evidence="4">
        <dbReference type="Rhea" id="RHEA:15566"/>
    </physiologicalReaction>
</comment>
<comment type="catalytic activity">
    <reaction>
        <text>an N-acetyl-L-cysteine-S-conjugate + H2O = an S-substituted L-cysteine + acetate</text>
        <dbReference type="Rhea" id="RHEA:36855"/>
        <dbReference type="ChEBI" id="CHEBI:15377"/>
        <dbReference type="ChEBI" id="CHEBI:30089"/>
        <dbReference type="ChEBI" id="CHEBI:58717"/>
        <dbReference type="ChEBI" id="CHEBI:58718"/>
        <dbReference type="EC" id="3.5.1.14"/>
    </reaction>
</comment>
<comment type="cofactor">
    <cofactor evidence="1">
        <name>Zn(2+)</name>
        <dbReference type="ChEBI" id="CHEBI:29105"/>
    </cofactor>
    <text evidence="1">Binds 2 Zn(2+) ions per subunit.</text>
</comment>
<comment type="subunit">
    <text evidence="1">Homodimer.</text>
</comment>
<comment type="subcellular location">
    <subcellularLocation>
        <location evidence="1">Cytoplasm</location>
    </subcellularLocation>
</comment>
<comment type="tissue specificity">
    <text evidence="2">Expressed in kidney.</text>
</comment>
<comment type="similarity">
    <text evidence="3">Belongs to the peptidase M20A family.</text>
</comment>
<sequence length="408" mass="45823">MTSKGPEEEHPSVTLFRQYLRIRTVQPKPDYGAAVAFFEETARQLGLGCQKVEVAPGYVVTVLTWPGTNPTLSSILLNSHTDVVPVFKEHWSHDPFEAFKDSEGYIYTRGAQDMKCVSIQYLEAVKRLKVEGHRFPRTIHMTFVPDEEVGGHQGMELFVQRHEFHALRAGFALDEGLANPTDAFTVFYSERSPWWVRVTSTGRPGHASRFMEDTAAEKLHKVVNSILAFREKEWQRLQSNPHLKEGSVTSVNLTKLEGGVAYNVVPATMSACFDFRVAPDVDMKAFEEQLQSWCQEAGEGVTFEFAQKFTEPRMTPTDDTDPWWAAFSGACKEMTLTLEPEIFPAATDSRYIRAVGIPALGFSPMNRTPVLLHDHNERLHEAVFLRGVDIYTRLVAALASVPALPGES</sequence>
<organism>
    <name type="scientific">Rattus norvegicus</name>
    <name type="common">Rat</name>
    <dbReference type="NCBI Taxonomy" id="10116"/>
    <lineage>
        <taxon>Eukaryota</taxon>
        <taxon>Metazoa</taxon>
        <taxon>Chordata</taxon>
        <taxon>Craniata</taxon>
        <taxon>Vertebrata</taxon>
        <taxon>Euteleostomi</taxon>
        <taxon>Mammalia</taxon>
        <taxon>Eutheria</taxon>
        <taxon>Euarchontoglires</taxon>
        <taxon>Glires</taxon>
        <taxon>Rodentia</taxon>
        <taxon>Myomorpha</taxon>
        <taxon>Muroidea</taxon>
        <taxon>Muridae</taxon>
        <taxon>Murinae</taxon>
        <taxon>Rattus</taxon>
    </lineage>
</organism>
<reference key="1">
    <citation type="journal article" date="2000" name="Eur. J. Biochem.">
        <title>The rat kidney acylase I, characterization and molecular cloning. Differences with other acylases I.</title>
        <authorList>
            <person name="Giardina T."/>
            <person name="Perrier J."/>
            <person name="Puigserver A."/>
        </authorList>
    </citation>
    <scope>NUCLEOTIDE SEQUENCE [MRNA]</scope>
    <scope>PROTEIN SEQUENCE OF 161-178</scope>
    <scope>FUNCTION</scope>
    <scope>TISSUE SPECIFICITY</scope>
    <scope>CATALYTIC ACTIVITY</scope>
    <source>
        <strain>Wistar</strain>
        <tissue>Kidney</tissue>
    </source>
</reference>
<reference key="2">
    <citation type="journal article" date="2004" name="Comp. Biochem. Physiol.">
        <title>The rat kidney acylase 1. Evidence for a new cDNA form and comparisons with the porcine intestinal enzyme.</title>
        <authorList>
            <person name="Perrier J."/>
            <person name="Durand A."/>
            <person name="Giardina T."/>
            <person name="Puigserver A."/>
        </authorList>
    </citation>
    <scope>NUCLEOTIDE SEQUENCE [MRNA]</scope>
    <source>
        <strain>Wistar</strain>
    </source>
</reference>
<reference key="3">
    <citation type="journal article" date="2012" name="Nat. Commun.">
        <title>Quantitative maps of protein phosphorylation sites across 14 different rat organs and tissues.</title>
        <authorList>
            <person name="Lundby A."/>
            <person name="Secher A."/>
            <person name="Lage K."/>
            <person name="Nordsborg N.B."/>
            <person name="Dmytriyev A."/>
            <person name="Lundby C."/>
            <person name="Olsen J.V."/>
        </authorList>
    </citation>
    <scope>PHOSPHORYLATION [LARGE SCALE ANALYSIS] AT SER-408</scope>
    <scope>IDENTIFICATION BY MASS SPECTROMETRY [LARGE SCALE ANALYSIS]</scope>
</reference>
<keyword id="KW-0963">Cytoplasm</keyword>
<keyword id="KW-0903">Direct protein sequencing</keyword>
<keyword id="KW-0378">Hydrolase</keyword>
<keyword id="KW-0479">Metal-binding</keyword>
<keyword id="KW-0597">Phosphoprotein</keyword>
<keyword id="KW-1185">Reference proteome</keyword>
<keyword id="KW-0862">Zinc</keyword>
<name>ACY1B_RAT</name>
<protein>
    <recommendedName>
        <fullName>Aminoacylase-1B</fullName>
        <shortName>ACY-1B</shortName>
        <ecNumber evidence="4">3.5.1.14</ecNumber>
    </recommendedName>
    <alternativeName>
        <fullName>ACY IB</fullName>
    </alternativeName>
    <alternativeName>
        <fullName>N-acyl-L-amino-acid amidohydrolase</fullName>
    </alternativeName>
</protein>
<feature type="chain" id="PRO_0000274010" description="Aminoacylase-1B">
    <location>
        <begin position="1"/>
        <end position="408"/>
    </location>
</feature>
<feature type="active site" evidence="1">
    <location>
        <position position="82"/>
    </location>
</feature>
<feature type="active site" description="Proton acceptor" evidence="1">
    <location>
        <position position="147"/>
    </location>
</feature>
<feature type="binding site" evidence="1">
    <location>
        <position position="80"/>
    </location>
    <ligand>
        <name>Zn(2+)</name>
        <dbReference type="ChEBI" id="CHEBI:29105"/>
        <label>1</label>
    </ligand>
</feature>
<feature type="binding site" evidence="1">
    <location>
        <position position="113"/>
    </location>
    <ligand>
        <name>Zn(2+)</name>
        <dbReference type="ChEBI" id="CHEBI:29105"/>
        <label>1</label>
    </ligand>
</feature>
<feature type="binding site" evidence="1">
    <location>
        <position position="113"/>
    </location>
    <ligand>
        <name>Zn(2+)</name>
        <dbReference type="ChEBI" id="CHEBI:29105"/>
        <label>2</label>
    </ligand>
</feature>
<feature type="binding site" evidence="1">
    <location>
        <position position="148"/>
    </location>
    <ligand>
        <name>Zn(2+)</name>
        <dbReference type="ChEBI" id="CHEBI:29105"/>
        <label>2</label>
    </ligand>
</feature>
<feature type="binding site" evidence="1">
    <location>
        <position position="175"/>
    </location>
    <ligand>
        <name>Zn(2+)</name>
        <dbReference type="ChEBI" id="CHEBI:29105"/>
        <label>1</label>
    </ligand>
</feature>
<feature type="binding site" evidence="1">
    <location>
        <position position="373"/>
    </location>
    <ligand>
        <name>Zn(2+)</name>
        <dbReference type="ChEBI" id="CHEBI:29105"/>
        <label>2</label>
    </ligand>
</feature>
<feature type="modified residue" description="Phosphoserine" evidence="5">
    <location>
        <position position="408"/>
    </location>
</feature>
<dbReference type="EC" id="3.5.1.14" evidence="4"/>
<dbReference type="EMBL" id="AY580165">
    <property type="protein sequence ID" value="AAS90691.1"/>
    <property type="molecule type" value="mRNA"/>
</dbReference>
<dbReference type="SMR" id="Q6PTT0"/>
<dbReference type="iPTMnet" id="Q6PTT0"/>
<dbReference type="jPOST" id="Q6PTT0"/>
<dbReference type="UCSC" id="RGD:2030">
    <property type="organism name" value="rat"/>
</dbReference>
<dbReference type="AGR" id="RGD:2030"/>
<dbReference type="RGD" id="2030">
    <property type="gene designation" value="Acy1"/>
</dbReference>
<dbReference type="PhylomeDB" id="Q6PTT0"/>
<dbReference type="Proteomes" id="UP000002494">
    <property type="component" value="Unplaced"/>
</dbReference>
<dbReference type="GO" id="GO:0005737">
    <property type="term" value="C:cytoplasm"/>
    <property type="evidence" value="ECO:0007669"/>
    <property type="project" value="UniProtKB-SubCell"/>
</dbReference>
<dbReference type="GO" id="GO:0070062">
    <property type="term" value="C:extracellular exosome"/>
    <property type="evidence" value="ECO:0000266"/>
    <property type="project" value="RGD"/>
</dbReference>
<dbReference type="GO" id="GO:0004046">
    <property type="term" value="F:aminoacylase activity"/>
    <property type="evidence" value="ECO:0000314"/>
    <property type="project" value="RGD"/>
</dbReference>
<dbReference type="GO" id="GO:0042802">
    <property type="term" value="F:identical protein binding"/>
    <property type="evidence" value="ECO:0000266"/>
    <property type="project" value="RGD"/>
</dbReference>
<dbReference type="GO" id="GO:0046872">
    <property type="term" value="F:metal ion binding"/>
    <property type="evidence" value="ECO:0007669"/>
    <property type="project" value="UniProtKB-KW"/>
</dbReference>
<dbReference type="GO" id="GO:0006520">
    <property type="term" value="P:amino acid metabolic process"/>
    <property type="evidence" value="ECO:0007669"/>
    <property type="project" value="InterPro"/>
</dbReference>
<dbReference type="GO" id="GO:0030163">
    <property type="term" value="P:protein catabolic process"/>
    <property type="evidence" value="ECO:0000304"/>
    <property type="project" value="RGD"/>
</dbReference>
<dbReference type="CDD" id="cd05646">
    <property type="entry name" value="M20_AcylaseI_like"/>
    <property type="match status" value="1"/>
</dbReference>
<dbReference type="FunFam" id="3.40.630.10:FF:000019">
    <property type="entry name" value="Aminoacylase 1"/>
    <property type="match status" value="1"/>
</dbReference>
<dbReference type="FunFam" id="1.10.150.900:FF:000001">
    <property type="entry name" value="Aminoacylase-1, putative"/>
    <property type="match status" value="1"/>
</dbReference>
<dbReference type="FunFam" id="3.30.70.360:FF:000005">
    <property type="entry name" value="Putative Aminoacylase-1"/>
    <property type="match status" value="1"/>
</dbReference>
<dbReference type="Gene3D" id="1.10.150.900">
    <property type="match status" value="1"/>
</dbReference>
<dbReference type="Gene3D" id="3.30.70.360">
    <property type="match status" value="1"/>
</dbReference>
<dbReference type="Gene3D" id="3.40.630.10">
    <property type="entry name" value="Zn peptidases"/>
    <property type="match status" value="1"/>
</dbReference>
<dbReference type="InterPro" id="IPR052083">
    <property type="entry name" value="Aminoacylase-1_M20A"/>
</dbReference>
<dbReference type="InterPro" id="IPR001261">
    <property type="entry name" value="ArgE/DapE_CS"/>
</dbReference>
<dbReference type="InterPro" id="IPR036264">
    <property type="entry name" value="Bact_exopeptidase_dim_dom"/>
</dbReference>
<dbReference type="InterPro" id="IPR010159">
    <property type="entry name" value="N-acyl_aa_amidohydrolase"/>
</dbReference>
<dbReference type="InterPro" id="IPR002933">
    <property type="entry name" value="Peptidase_M20"/>
</dbReference>
<dbReference type="InterPro" id="IPR011650">
    <property type="entry name" value="Peptidase_M20_dimer"/>
</dbReference>
<dbReference type="NCBIfam" id="TIGR01880">
    <property type="entry name" value="Ac-peptdase-euk"/>
    <property type="match status" value="1"/>
</dbReference>
<dbReference type="PANTHER" id="PTHR45892">
    <property type="entry name" value="AMINOACYLASE-1"/>
    <property type="match status" value="1"/>
</dbReference>
<dbReference type="PANTHER" id="PTHR45892:SF1">
    <property type="entry name" value="AMINOACYLASE-1"/>
    <property type="match status" value="1"/>
</dbReference>
<dbReference type="Pfam" id="PF07687">
    <property type="entry name" value="M20_dimer"/>
    <property type="match status" value="1"/>
</dbReference>
<dbReference type="Pfam" id="PF01546">
    <property type="entry name" value="Peptidase_M20"/>
    <property type="match status" value="1"/>
</dbReference>
<dbReference type="PIRSF" id="PIRSF036696">
    <property type="entry name" value="ACY-1"/>
    <property type="match status" value="1"/>
</dbReference>
<dbReference type="SUPFAM" id="SSF55031">
    <property type="entry name" value="Bacterial exopeptidase dimerisation domain"/>
    <property type="match status" value="1"/>
</dbReference>
<dbReference type="SUPFAM" id="SSF53187">
    <property type="entry name" value="Zn-dependent exopeptidases"/>
    <property type="match status" value="1"/>
</dbReference>
<dbReference type="PROSITE" id="PS00758">
    <property type="entry name" value="ARGE_DAPE_CPG2_1"/>
    <property type="match status" value="1"/>
</dbReference>
<dbReference type="PROSITE" id="PS00759">
    <property type="entry name" value="ARGE_DAPE_CPG2_2"/>
    <property type="match status" value="1"/>
</dbReference>
<gene>
    <name type="primary">Acy1b</name>
    <name type="synonym">Acy1</name>
</gene>